<protein>
    <recommendedName>
        <fullName evidence="23">Adhesion G-protein coupled receptor G1</fullName>
    </recommendedName>
    <alternativeName>
        <fullName evidence="21">G-protein coupled receptor 56</fullName>
    </alternativeName>
    <alternativeName>
        <fullName>Serpentine receptor cyt28</fullName>
    </alternativeName>
    <component>
        <recommendedName>
            <fullName>Adhesion G-protein coupled receptor G1, N-terminal fragment</fullName>
        </recommendedName>
        <alternativeName>
            <fullName>ADGRG1 N-terminal fragment</fullName>
            <shortName>ADGRG1 NT</shortName>
        </alternativeName>
        <alternativeName>
            <fullName>GPR56 N-terminal fragment</fullName>
            <shortName>GPR56 NT</shortName>
            <shortName>GPR56(N)</shortName>
        </alternativeName>
        <alternativeName>
            <fullName>GPR56 extracellular subunit</fullName>
        </alternativeName>
        <alternativeName>
            <fullName>GPR56 subunit alpha</fullName>
        </alternativeName>
    </component>
    <component>
        <recommendedName>
            <fullName>Adhesion G-protein coupled receptor G1, C-terminal fragment</fullName>
        </recommendedName>
        <alternativeName>
            <fullName>ADGRG1 C-terminal fragment</fullName>
            <shortName>ADGRG1-CT</shortName>
        </alternativeName>
        <alternativeName>
            <fullName>GPR56 C-terminal fragment</fullName>
            <shortName>GPR56 CT</shortName>
            <shortName>GPR56(C)</shortName>
        </alternativeName>
        <alternativeName>
            <fullName>GPR56 seven-transmembrane subunit</fullName>
            <shortName>GPR56 7TM</shortName>
        </alternativeName>
        <alternativeName>
            <fullName>GPR56 subunit beta</fullName>
        </alternativeName>
    </component>
</protein>
<comment type="function">
    <text evidence="1 6 7 8 9 10 12 13 16 17 19 20">Adhesion G-protein coupled receptor (aGPCR) for steroid hormone 17alpha-hydroxypregnenolone (17-OH), which is involved in cell adhesion and cell-cell interactions (PubMed:31628191, PubMed:39389061). Ligand binding causes a conformation change that triggers signaling via guanine nucleotide-binding proteins (G proteins) and modulates the activity of downstream effectors, such as RhoA pathway (PubMed:39389061). ADGRG1 is coupled to G(12) and/or G(13) G proteins (GNA12 and GNA13, respectively) and mediates the activation Rho small GTPases (PubMed:18378689, PubMed:33097663, PubMed:39389061). Acts as a potent suppressor of ferroptosis: binding to 17-OH-binding initiates signaling that down-regulates CD36 and alleviates ferroptosis-induced liver injury (PubMed:39389061). Ligand-binding also induces cell adhesion activity via association with proteins such as collagen III/COL3A1 and TGM2 (By similarity). Mediates cell matrix adhesion in developing neurons and hematopoietic stem cells (PubMed:18509043). Involved in cortical development, specifically in maintenance of the pial basement membrane integrity and in cortical lamination: association with COL3A1 in the developing brain inhibits neuronal migration via activation of the RhoA pathway (PubMed:19515912, PubMed:21768377, PubMed:24531968). Together with TGM2, acts as a regulator of myelination and myelin repair in oligodendrocyte precursor cells (PubMed:29809138). Acts as a hemostatic sensor of shear force: G protein-coupled receptor signaling is activated in response to shear force in platelets, promoting G(13) G protein signaling, and platelet shape change and aggregation in a COL3A1-dependent manner (PubMed:33097663). Acts as an inhibitor of VEGFA production thereby inhibiting angiogenesis through a signaling pathway mediated by PRKCA (By similarity). Plays a role in the maintenance of hematopoietic stem cells in bone marrow niche (PubMed:23478665). Plays an essential role in testis development (PubMed:20981830).</text>
</comment>
<comment type="function">
    <molecule>Isoform 2</molecule>
    <text evidence="18">Adhesion G-protein coupled receptor (aGPCR) for phosphatidylserine, which is involved in microglia-mediated synapse pruning during development (PubMed:32452062). Required to maintain appropriate synaptic numbers in several brain regions in a time- and circuit-dependent fashion: phosphatidylserine-binding acts as a 'eat-me' signal for apoptotic cells, leading to microglial engulfment of phosphatidylserine-positive synapses (PubMed:32452062).</text>
</comment>
<comment type="activity regulation">
    <text evidence="1 17">Forms a heterodimer of 2 chains generated by proteolytic processing that remain associated through non-covalent interactions mediated by the GAIN-B domain (PubMed:31628191). In the inactivated receptor, the Stachel sequence (also named stalk) is embedded in the GAIN-B domain, where it adopts a beta-strand conformation (By similarity). On activation, the Stachel moves into the 7 transmembrane region and adopts a twisted hook-shaped configuration that forms contacts within the receptor, leading to coupling of a G-alpha protein, which activates signaling (By similarity). The cleaved GAIN-B and N-terminal domains can then dissociate from the rest of the receptor (By similarity). Activated by the small-molecule agonist, 3-alpha-acetoxydihydrodeoxygedunin (3-alpha-DOG) (PubMed:31628191).</text>
</comment>
<comment type="subunit">
    <text evidence="1 14 17">Heterodimer of 2 chains generated by proteolytic processing; the large extracellular N-terminal fragment (ADGRG1 NT) and the membrane-bound C-terminal fragment (ADGRG1-CT) predominantly remain associated and non-covalently linked (By similarity). ADGRG1 NT self-associates in a trans-trans manner; the homophilic interaction enhances receptor signaling (By similarity). Interacts with TGM2 (PubMed:31628191). Interacts with heparin; leading to the reduction of ADGRG1 shedding (PubMed:27068534). Interacts with COL3A1 (By similarity). Part of a GPCR-tetraspanin complex at least consisting of ADGRG1, CD81, eventually CD9, and GNA11 in which CD81 is enhancing the association of ADGRG1 with GNA11 (By similarity).</text>
</comment>
<comment type="interaction">
    <interactant intactId="EBI-6856929">
        <id>Q8K209</id>
    </interactant>
    <interactant intactId="EBI-770649">
        <id>Q80TR1</id>
        <label>Adgrl1</label>
    </interactant>
    <organismsDiffer>false</organismsDiffer>
    <experiments>2</experiments>
</comment>
<comment type="subcellular location">
    <subcellularLocation>
        <location evidence="5 11">Cell membrane</location>
        <topology evidence="2">Multi-pass membrane protein</topology>
    </subcellularLocation>
</comment>
<comment type="subcellular location">
    <molecule>Adhesion G-protein coupled receptor G1, N-terminal fragment</molecule>
    <subcellularLocation>
        <location evidence="1">Secreted</location>
    </subcellularLocation>
</comment>
<comment type="subcellular location">
    <molecule>Adhesion G-protein coupled receptor G1, C-terminal fragment</molecule>
    <subcellularLocation>
        <location evidence="1">Membrane raft</location>
    </subcellularLocation>
    <text evidence="1">Interaction with its ligand COL3A1 leads to the release of ADGRG1 NT from the membrane and triggers the association of ADGRG1 CT with lipid rafts.</text>
</comment>
<comment type="subcellular location">
    <molecule>Isoform 2</molecule>
    <subcellularLocation>
        <location evidence="15">Cell membrane</location>
        <topology evidence="2">Multi-pass membrane protein</topology>
    </subcellularLocation>
</comment>
<comment type="alternative products">
    <event type="alternative splicing"/>
    <isoform>
        <id>Q8K209-1</id>
        <name>1</name>
        <sequence type="displayed"/>
    </isoform>
    <isoform>
        <id>Q8K209-2</id>
        <name>2</name>
        <name evidence="22">S4</name>
        <sequence type="described" ref="VSP_062562"/>
    </isoform>
</comment>
<comment type="tissue specificity">
    <text evidence="9 10">Expressed in neural progenitor cells in fetal forbrain. Expressed in migrating neurons. Expressed in radial glial endfeet (at protein level) (PubMed:21768377). Expressed in peritubular myoid cells, Sertoli cells, and germ cells of the testis (PubMed:20981830).</text>
</comment>
<comment type="domain">
    <text evidence="1">The Stachel sequence (also named stalk) in the C-terminal part of the extracellular domain (ECD) functions as a tethered agonist (By similarity). In the inactivated receptor, the Stachel sequence (also named stalk) is embedded in the GAIN-B domain, where it adopts a beta-strand conformation (By similarity). On activation, the Stachel moves into the 7 transmembrane region and adopts a twisted hook-shaped configuration that forms contacts within the receptor, leading to coupling of a G-alpha protein, which activates signaling (By similarity).</text>
</comment>
<comment type="PTM">
    <text evidence="11 17">Autoproteolytically cleaved into 2 fragments; the large extracellular N-terminal fragment and the membroune-bound C-terminal fragment predominantly remain associated and non-covalently linked.</text>
</comment>
<comment type="PTM">
    <text evidence="5">N-glycosylated. The secreted ADGRG1 N-terminal fragment is heavily glycosylated.</text>
</comment>
<comment type="PTM">
    <text evidence="1">Ubiquitinated. Undergoes polyubiquitination upon activation.</text>
</comment>
<comment type="disruption phenotype">
    <text evidence="7 9 13 20">Cobblestone-like cortical malformation with defective pial basement membrane (BM), abnormal anchorage of radial glial endfeet, mislocalized Cajal-Retzius cells and neuronal overmigration (PubMed:18509043). Severe malformation of the rostral cerebellum that develops perinatally (PubMed:18509043, PubMed:24531968). Granule cells from the rostral region show loss of adhesion to extracellular matrix molecules of the pial basement membrane (PubMed:24531968). In ADGRG1 knockout mice, neurons overmigrate through breached pial basement membrane or undermigrate forming irregular cortical layers (PubMed:24531968). Deficient mice shown disruption of seminiferous tubule formation and increased sterility (PubMed:20981830). Conditional deletion in hepatocytes aggravates symptoms of liver injury induced by doxorubicin or ischemia-reperfusion (PubMed:39389061).</text>
</comment>
<comment type="disruption phenotype">
    <molecule>Isoform 2</molecule>
    <text evidence="18">Conditional deletion in microglia leads to increased synapses as a result of reduced microglial engulfment of phosphatidylserine-positive synapsesd.</text>
</comment>
<comment type="similarity">
    <text evidence="23">Belongs to the G-protein coupled receptor 2 family. LN-TM7 subfamily.</text>
</comment>
<dbReference type="EMBL" id="AF166382">
    <property type="protein sequence ID" value="AAF00617.1"/>
    <property type="molecule type" value="mRNA"/>
</dbReference>
<dbReference type="EMBL" id="AK087268">
    <property type="protein sequence ID" value="BAC39835.1"/>
    <property type="molecule type" value="mRNA"/>
</dbReference>
<dbReference type="EMBL" id="AK133678">
    <property type="protein sequence ID" value="BAE21780.1"/>
    <property type="molecule type" value="mRNA"/>
</dbReference>
<dbReference type="EMBL" id="AK141886">
    <property type="protein sequence ID" value="BAE24871.1"/>
    <property type="molecule type" value="mRNA"/>
</dbReference>
<dbReference type="EMBL" id="AK141894">
    <property type="protein sequence ID" value="BAE24874.1"/>
    <property type="molecule type" value="mRNA"/>
</dbReference>
<dbReference type="EMBL" id="AK167547">
    <property type="protein sequence ID" value="BAE39613.1"/>
    <property type="molecule type" value="mRNA"/>
</dbReference>
<dbReference type="EMBL" id="BC034678">
    <property type="protein sequence ID" value="AAH34678.1"/>
    <property type="molecule type" value="mRNA"/>
</dbReference>
<dbReference type="CCDS" id="CCDS22553.1"/>
<dbReference type="RefSeq" id="NP_001185823.1">
    <property type="nucleotide sequence ID" value="NM_001198894.2"/>
</dbReference>
<dbReference type="RefSeq" id="NP_001390705.1">
    <property type="nucleotide sequence ID" value="NM_001403776.1"/>
</dbReference>
<dbReference type="RefSeq" id="NP_001390707.1">
    <property type="nucleotide sequence ID" value="NM_001403778.1"/>
</dbReference>
<dbReference type="RefSeq" id="NP_001390708.1">
    <property type="nucleotide sequence ID" value="NM_001403779.1"/>
</dbReference>
<dbReference type="RefSeq" id="NP_001390709.1">
    <property type="nucleotide sequence ID" value="NM_001403780.1"/>
</dbReference>
<dbReference type="RefSeq" id="NP_001390710.1">
    <property type="nucleotide sequence ID" value="NM_001403781.1"/>
</dbReference>
<dbReference type="RefSeq" id="NP_001390711.1">
    <property type="nucleotide sequence ID" value="NM_001403782.1"/>
</dbReference>
<dbReference type="RefSeq" id="NP_001390712.1">
    <property type="nucleotide sequence ID" value="NM_001403783.1"/>
</dbReference>
<dbReference type="RefSeq" id="NP_001390713.1">
    <property type="nucleotide sequence ID" value="NM_001403784.1"/>
</dbReference>
<dbReference type="RefSeq" id="NP_001390714.1">
    <property type="nucleotide sequence ID" value="NM_001403785.1"/>
</dbReference>
<dbReference type="RefSeq" id="NP_001390715.1">
    <property type="nucleotide sequence ID" value="NM_001403786.1"/>
</dbReference>
<dbReference type="RefSeq" id="NP_001390716.1">
    <property type="nucleotide sequence ID" value="NM_001403787.1"/>
</dbReference>
<dbReference type="RefSeq" id="NP_001390717.1">
    <property type="nucleotide sequence ID" value="NM_001403788.1"/>
</dbReference>
<dbReference type="RefSeq" id="NP_061370.2">
    <property type="nucleotide sequence ID" value="NM_018882.3"/>
</dbReference>
<dbReference type="RefSeq" id="XP_006530755.1">
    <property type="nucleotide sequence ID" value="XM_006530692.2"/>
</dbReference>
<dbReference type="RefSeq" id="XP_006530756.1">
    <property type="nucleotide sequence ID" value="XM_006530693.2"/>
</dbReference>
<dbReference type="RefSeq" id="XP_006530757.1">
    <property type="nucleotide sequence ID" value="XM_006530694.2"/>
</dbReference>
<dbReference type="RefSeq" id="XP_006530758.1">
    <property type="nucleotide sequence ID" value="XM_006530695.2"/>
</dbReference>
<dbReference type="RefSeq" id="XP_006530759.1">
    <property type="nucleotide sequence ID" value="XM_006530696.3"/>
</dbReference>
<dbReference type="RefSeq" id="XP_006530760.1">
    <property type="nucleotide sequence ID" value="XM_006530697.3"/>
</dbReference>
<dbReference type="PDB" id="5KVM">
    <property type="method" value="X-ray"/>
    <property type="resolution" value="2.45 A"/>
    <property type="chains" value="A=28-382, B=383-391"/>
</dbReference>
<dbReference type="PDBsum" id="5KVM"/>
<dbReference type="SMR" id="Q8K209"/>
<dbReference type="FunCoup" id="Q8K209">
    <property type="interactions" value="35"/>
</dbReference>
<dbReference type="IntAct" id="Q8K209">
    <property type="interactions" value="2"/>
</dbReference>
<dbReference type="MINT" id="Q8K209"/>
<dbReference type="STRING" id="10090.ENSMUSP00000137520"/>
<dbReference type="MEROPS" id="P02.008"/>
<dbReference type="GlyConnect" id="2362">
    <property type="glycosylation" value="3 N-Linked glycans (3 sites)"/>
</dbReference>
<dbReference type="GlyCosmos" id="Q8K209">
    <property type="glycosylation" value="7 sites, 3 glycans"/>
</dbReference>
<dbReference type="GlyGen" id="Q8K209">
    <property type="glycosylation" value="8 sites, 6 N-linked glycans (5 sites), 1 O-linked glycan (1 site)"/>
</dbReference>
<dbReference type="iPTMnet" id="Q8K209"/>
<dbReference type="PhosphoSitePlus" id="Q8K209"/>
<dbReference type="SwissPalm" id="Q8K209"/>
<dbReference type="PaxDb" id="10090-ENSMUSP00000137520"/>
<dbReference type="PeptideAtlas" id="Q8K209"/>
<dbReference type="ProteomicsDB" id="285772"/>
<dbReference type="ABCD" id="Q8K209">
    <property type="antibodies" value="7 sequenced antibodies"/>
</dbReference>
<dbReference type="Antibodypedia" id="15123">
    <property type="antibodies" value="335 antibodies from 35 providers"/>
</dbReference>
<dbReference type="DNASU" id="14766"/>
<dbReference type="Ensembl" id="ENSMUST00000093271.8">
    <property type="protein sequence ID" value="ENSMUSP00000090959.7"/>
    <property type="gene ID" value="ENSMUSG00000031785.17"/>
</dbReference>
<dbReference type="Ensembl" id="ENSMUST00000179619.9">
    <property type="protein sequence ID" value="ENSMUSP00000137520.2"/>
    <property type="gene ID" value="ENSMUSG00000031785.17"/>
</dbReference>
<dbReference type="Ensembl" id="ENSMUST00000212660.2">
    <property type="protein sequence ID" value="ENSMUSP00000148644.2"/>
    <property type="gene ID" value="ENSMUSG00000031785.17"/>
</dbReference>
<dbReference type="GeneID" id="14766"/>
<dbReference type="KEGG" id="mmu:14766"/>
<dbReference type="UCSC" id="uc009mxl.2">
    <property type="organism name" value="mouse"/>
</dbReference>
<dbReference type="AGR" id="MGI:1340051"/>
<dbReference type="CTD" id="9289"/>
<dbReference type="MGI" id="MGI:1340051">
    <property type="gene designation" value="Adgrg1"/>
</dbReference>
<dbReference type="VEuPathDB" id="HostDB:ENSMUSG00000031785"/>
<dbReference type="eggNOG" id="KOG4193">
    <property type="taxonomic scope" value="Eukaryota"/>
</dbReference>
<dbReference type="GeneTree" id="ENSGT00940000160843"/>
<dbReference type="HOGENOM" id="CLU_002753_3_9_1"/>
<dbReference type="InParanoid" id="Q8K209"/>
<dbReference type="OMA" id="TYIHRDY"/>
<dbReference type="PhylomeDB" id="Q8K209"/>
<dbReference type="TreeFam" id="TF321769"/>
<dbReference type="BioGRID-ORCS" id="14766">
    <property type="hits" value="2 hits in 78 CRISPR screens"/>
</dbReference>
<dbReference type="ChiTaRS" id="Adgrg1">
    <property type="organism name" value="mouse"/>
</dbReference>
<dbReference type="PRO" id="PR:Q8K209"/>
<dbReference type="Proteomes" id="UP000000589">
    <property type="component" value="Chromosome 8"/>
</dbReference>
<dbReference type="RNAct" id="Q8K209">
    <property type="molecule type" value="protein"/>
</dbReference>
<dbReference type="Bgee" id="ENSMUSG00000031785">
    <property type="expression patterns" value="Expressed in mouth mucosa and 272 other cell types or tissues"/>
</dbReference>
<dbReference type="ExpressionAtlas" id="Q8K209">
    <property type="expression patterns" value="baseline and differential"/>
</dbReference>
<dbReference type="GO" id="GO:0005576">
    <property type="term" value="C:extracellular region"/>
    <property type="evidence" value="ECO:0007669"/>
    <property type="project" value="UniProtKB-SubCell"/>
</dbReference>
<dbReference type="GO" id="GO:0097451">
    <property type="term" value="C:glial limiting end-foot"/>
    <property type="evidence" value="ECO:0000314"/>
    <property type="project" value="UniProtKB"/>
</dbReference>
<dbReference type="GO" id="GO:0045121">
    <property type="term" value="C:membrane raft"/>
    <property type="evidence" value="ECO:0007669"/>
    <property type="project" value="UniProtKB-SubCell"/>
</dbReference>
<dbReference type="GO" id="GO:0005886">
    <property type="term" value="C:plasma membrane"/>
    <property type="evidence" value="ECO:0000314"/>
    <property type="project" value="UniProtKB"/>
</dbReference>
<dbReference type="GO" id="GO:0005518">
    <property type="term" value="F:collagen binding"/>
    <property type="evidence" value="ECO:0000314"/>
    <property type="project" value="UniProtKB"/>
</dbReference>
<dbReference type="GO" id="GO:0050840">
    <property type="term" value="F:extracellular matrix binding"/>
    <property type="evidence" value="ECO:0000314"/>
    <property type="project" value="UniProtKB"/>
</dbReference>
<dbReference type="GO" id="GO:0004930">
    <property type="term" value="F:G protein-coupled receptor activity"/>
    <property type="evidence" value="ECO:0000314"/>
    <property type="project" value="UniProtKB"/>
</dbReference>
<dbReference type="GO" id="GO:0008201">
    <property type="term" value="F:heparin binding"/>
    <property type="evidence" value="ECO:0000314"/>
    <property type="project" value="UniProtKB"/>
</dbReference>
<dbReference type="GO" id="GO:0001786">
    <property type="term" value="F:phosphatidylserine binding"/>
    <property type="evidence" value="ECO:0000314"/>
    <property type="project" value="UniProtKB"/>
</dbReference>
<dbReference type="GO" id="GO:0001525">
    <property type="term" value="P:angiogenesis"/>
    <property type="evidence" value="ECO:0000250"/>
    <property type="project" value="UniProtKB"/>
</dbReference>
<dbReference type="GO" id="GO:0007155">
    <property type="term" value="P:cell adhesion"/>
    <property type="evidence" value="ECO:0000250"/>
    <property type="project" value="UniProtKB"/>
</dbReference>
<dbReference type="GO" id="GO:0016477">
    <property type="term" value="P:cell migration"/>
    <property type="evidence" value="ECO:0000250"/>
    <property type="project" value="UniProtKB"/>
</dbReference>
<dbReference type="GO" id="GO:0007166">
    <property type="term" value="P:cell surface receptor signaling pathway"/>
    <property type="evidence" value="ECO:0007669"/>
    <property type="project" value="InterPro"/>
</dbReference>
<dbReference type="GO" id="GO:0021801">
    <property type="term" value="P:cerebral cortex radial glia-guided migration"/>
    <property type="evidence" value="ECO:0000315"/>
    <property type="project" value="UniProtKB"/>
</dbReference>
<dbReference type="GO" id="GO:0021796">
    <property type="term" value="P:cerebral cortex regionalization"/>
    <property type="evidence" value="ECO:0000315"/>
    <property type="project" value="MGI"/>
</dbReference>
<dbReference type="GO" id="GO:0061484">
    <property type="term" value="P:hematopoietic stem cell homeostasis"/>
    <property type="evidence" value="ECO:0000315"/>
    <property type="project" value="MGI"/>
</dbReference>
<dbReference type="GO" id="GO:0021819">
    <property type="term" value="P:layer formation in cerebral cortex"/>
    <property type="evidence" value="ECO:0000315"/>
    <property type="project" value="UniProtKB"/>
</dbReference>
<dbReference type="GO" id="GO:0042552">
    <property type="term" value="P:myelination"/>
    <property type="evidence" value="ECO:0000314"/>
    <property type="project" value="UniProtKB"/>
</dbReference>
<dbReference type="GO" id="GO:0008285">
    <property type="term" value="P:negative regulation of cell population proliferation"/>
    <property type="evidence" value="ECO:0000250"/>
    <property type="project" value="UniProtKB"/>
</dbReference>
<dbReference type="GO" id="GO:0110076">
    <property type="term" value="P:negative regulation of ferroptosis"/>
    <property type="evidence" value="ECO:0000314"/>
    <property type="project" value="UniProtKB"/>
</dbReference>
<dbReference type="GO" id="GO:2001223">
    <property type="term" value="P:negative regulation of neuron migration"/>
    <property type="evidence" value="ECO:0000315"/>
    <property type="project" value="UniProtKB"/>
</dbReference>
<dbReference type="GO" id="GO:0061351">
    <property type="term" value="P:neural precursor cell proliferation"/>
    <property type="evidence" value="ECO:0000315"/>
    <property type="project" value="MGI"/>
</dbReference>
<dbReference type="GO" id="GO:0070444">
    <property type="term" value="P:oligodendrocyte progenitor proliferation"/>
    <property type="evidence" value="ECO:0000314"/>
    <property type="project" value="UniProtKB"/>
</dbReference>
<dbReference type="GO" id="GO:0007200">
    <property type="term" value="P:phospholipase C-activating G protein-coupled receptor signaling pathway"/>
    <property type="evidence" value="ECO:0000250"/>
    <property type="project" value="UniProtKB"/>
</dbReference>
<dbReference type="GO" id="GO:0045785">
    <property type="term" value="P:positive regulation of cell adhesion"/>
    <property type="evidence" value="ECO:0000250"/>
    <property type="project" value="UniProtKB"/>
</dbReference>
<dbReference type="GO" id="GO:2000179">
    <property type="term" value="P:positive regulation of neural precursor cell proliferation"/>
    <property type="evidence" value="ECO:0000315"/>
    <property type="project" value="MGI"/>
</dbReference>
<dbReference type="GO" id="GO:0035025">
    <property type="term" value="P:positive regulation of Rho protein signal transduction"/>
    <property type="evidence" value="ECO:0000315"/>
    <property type="project" value="UniProtKB"/>
</dbReference>
<dbReference type="GO" id="GO:1900748">
    <property type="term" value="P:positive regulation of vascular endothelial growth factor signaling pathway"/>
    <property type="evidence" value="ECO:0000250"/>
    <property type="project" value="UniProtKB"/>
</dbReference>
<dbReference type="GO" id="GO:0090330">
    <property type="term" value="P:regulation of platelet aggregation"/>
    <property type="evidence" value="ECO:0000314"/>
    <property type="project" value="UniProtKB"/>
</dbReference>
<dbReference type="GO" id="GO:1905806">
    <property type="term" value="P:regulation of synapse pruning"/>
    <property type="evidence" value="ECO:0000314"/>
    <property type="project" value="UniProtKB"/>
</dbReference>
<dbReference type="GO" id="GO:0007266">
    <property type="term" value="P:Rho protein signal transduction"/>
    <property type="evidence" value="ECO:0000250"/>
    <property type="project" value="UniProtKB"/>
</dbReference>
<dbReference type="GO" id="GO:0160221">
    <property type="term" value="P:Rho-activating G protein-coupled receptor signaling pathway"/>
    <property type="evidence" value="ECO:0000314"/>
    <property type="project" value="UniProtKB"/>
</dbReference>
<dbReference type="GO" id="GO:0072520">
    <property type="term" value="P:seminiferous tubule development"/>
    <property type="evidence" value="ECO:0000315"/>
    <property type="project" value="UniProtKB"/>
</dbReference>
<dbReference type="FunFam" id="2.60.220.50:FF:000014">
    <property type="entry name" value="Adhesion G-protein coupled receptor G1"/>
    <property type="match status" value="1"/>
</dbReference>
<dbReference type="FunFam" id="1.20.1070.10:FF:000117">
    <property type="entry name" value="adhesion G-protein coupled receptor G1"/>
    <property type="match status" value="1"/>
</dbReference>
<dbReference type="Gene3D" id="2.60.220.50">
    <property type="match status" value="1"/>
</dbReference>
<dbReference type="Gene3D" id="1.20.1070.10">
    <property type="entry name" value="Rhodopsin 7-helix transmembrane proteins"/>
    <property type="match status" value="1"/>
</dbReference>
<dbReference type="InterPro" id="IPR040950">
    <property type="entry name" value="ADGRG1_GAIN_A"/>
</dbReference>
<dbReference type="InterPro" id="IPR057244">
    <property type="entry name" value="GAIN_B"/>
</dbReference>
<dbReference type="InterPro" id="IPR046338">
    <property type="entry name" value="GAIN_dom_sf"/>
</dbReference>
<dbReference type="InterPro" id="IPR017981">
    <property type="entry name" value="GPCR_2-like_7TM"/>
</dbReference>
<dbReference type="InterPro" id="IPR000832">
    <property type="entry name" value="GPCR_2_secretin-like"/>
</dbReference>
<dbReference type="InterPro" id="IPR003910">
    <property type="entry name" value="GPR1/GPR3/GPR5"/>
</dbReference>
<dbReference type="InterPro" id="IPR000203">
    <property type="entry name" value="GPS"/>
</dbReference>
<dbReference type="InterPro" id="IPR040679">
    <property type="entry name" value="PLL"/>
</dbReference>
<dbReference type="PANTHER" id="PTHR12011">
    <property type="entry name" value="ADHESION G-PROTEIN COUPLED RECEPTOR"/>
    <property type="match status" value="1"/>
</dbReference>
<dbReference type="PANTHER" id="PTHR12011:SF318">
    <property type="entry name" value="ADHESION G-PROTEIN COUPLED RECEPTOR G1"/>
    <property type="match status" value="1"/>
</dbReference>
<dbReference type="Pfam" id="PF00002">
    <property type="entry name" value="7tm_2"/>
    <property type="match status" value="1"/>
</dbReference>
<dbReference type="Pfam" id="PF18619">
    <property type="entry name" value="GAIN_A"/>
    <property type="match status" value="1"/>
</dbReference>
<dbReference type="Pfam" id="PF01825">
    <property type="entry name" value="GPS"/>
    <property type="match status" value="1"/>
</dbReference>
<dbReference type="Pfam" id="PF18587">
    <property type="entry name" value="PLL"/>
    <property type="match status" value="1"/>
</dbReference>
<dbReference type="PRINTS" id="PR00249">
    <property type="entry name" value="GPCRSECRETIN"/>
</dbReference>
<dbReference type="PRINTS" id="PR01422">
    <property type="entry name" value="GPR56ORPHANR"/>
</dbReference>
<dbReference type="SMART" id="SM00303">
    <property type="entry name" value="GPS"/>
    <property type="match status" value="1"/>
</dbReference>
<dbReference type="PROSITE" id="PS50261">
    <property type="entry name" value="G_PROTEIN_RECEP_F2_4"/>
    <property type="match status" value="1"/>
</dbReference>
<dbReference type="PROSITE" id="PS50221">
    <property type="entry name" value="GAIN_B"/>
    <property type="match status" value="1"/>
</dbReference>
<evidence type="ECO:0000250" key="1">
    <source>
        <dbReference type="UniProtKB" id="Q9Y653"/>
    </source>
</evidence>
<evidence type="ECO:0000255" key="2"/>
<evidence type="ECO:0000255" key="3">
    <source>
        <dbReference type="PROSITE-ProRule" id="PRU00098"/>
    </source>
</evidence>
<evidence type="ECO:0000256" key="4">
    <source>
        <dbReference type="SAM" id="MobiDB-lite"/>
    </source>
</evidence>
<evidence type="ECO:0000269" key="5">
    <source>
    </source>
</evidence>
<evidence type="ECO:0000269" key="6">
    <source>
    </source>
</evidence>
<evidence type="ECO:0000269" key="7">
    <source>
    </source>
</evidence>
<evidence type="ECO:0000269" key="8">
    <source>
    </source>
</evidence>
<evidence type="ECO:0000269" key="9">
    <source>
    </source>
</evidence>
<evidence type="ECO:0000269" key="10">
    <source>
    </source>
</evidence>
<evidence type="ECO:0000269" key="11">
    <source>
    </source>
</evidence>
<evidence type="ECO:0000269" key="12">
    <source>
    </source>
</evidence>
<evidence type="ECO:0000269" key="13">
    <source>
    </source>
</evidence>
<evidence type="ECO:0000269" key="14">
    <source>
    </source>
</evidence>
<evidence type="ECO:0000269" key="15">
    <source>
    </source>
</evidence>
<evidence type="ECO:0000269" key="16">
    <source>
    </source>
</evidence>
<evidence type="ECO:0000269" key="17">
    <source>
    </source>
</evidence>
<evidence type="ECO:0000269" key="18">
    <source>
    </source>
</evidence>
<evidence type="ECO:0000269" key="19">
    <source>
    </source>
</evidence>
<evidence type="ECO:0000269" key="20">
    <source>
    </source>
</evidence>
<evidence type="ECO:0000303" key="21">
    <source>
    </source>
</evidence>
<evidence type="ECO:0000303" key="22">
    <source>
    </source>
</evidence>
<evidence type="ECO:0000305" key="23"/>
<evidence type="ECO:0000305" key="24">
    <source>
    </source>
</evidence>
<evidence type="ECO:0000312" key="25">
    <source>
        <dbReference type="MGI" id="MGI:1340051"/>
    </source>
</evidence>
<evidence type="ECO:0007744" key="26">
    <source>
        <dbReference type="PDB" id="5KVM"/>
    </source>
</evidence>
<evidence type="ECO:0007829" key="27">
    <source>
        <dbReference type="PDB" id="5KVM"/>
    </source>
</evidence>
<organism>
    <name type="scientific">Mus musculus</name>
    <name type="common">Mouse</name>
    <dbReference type="NCBI Taxonomy" id="10090"/>
    <lineage>
        <taxon>Eukaryota</taxon>
        <taxon>Metazoa</taxon>
        <taxon>Chordata</taxon>
        <taxon>Craniata</taxon>
        <taxon>Vertebrata</taxon>
        <taxon>Euteleostomi</taxon>
        <taxon>Mammalia</taxon>
        <taxon>Eutheria</taxon>
        <taxon>Euarchontoglires</taxon>
        <taxon>Glires</taxon>
        <taxon>Rodentia</taxon>
        <taxon>Myomorpha</taxon>
        <taxon>Muroidea</taxon>
        <taxon>Muridae</taxon>
        <taxon>Murinae</taxon>
        <taxon>Mus</taxon>
        <taxon>Mus</taxon>
    </lineage>
</organism>
<accession>Q8K209</accession>
<accession>Q3UR17</accession>
<accession>Q9QZT2</accession>
<keyword id="KW-0002">3D-structure</keyword>
<keyword id="KW-0025">Alternative splicing</keyword>
<keyword id="KW-0130">Cell adhesion</keyword>
<keyword id="KW-1003">Cell membrane</keyword>
<keyword id="KW-0217">Developmental protein</keyword>
<keyword id="KW-0221">Differentiation</keyword>
<keyword id="KW-1015">Disulfide bond</keyword>
<keyword id="KW-0297">G-protein coupled receptor</keyword>
<keyword id="KW-0325">Glycoprotein</keyword>
<keyword id="KW-0358">Heparin-binding</keyword>
<keyword id="KW-0472">Membrane</keyword>
<keyword id="KW-0524">Neurogenesis</keyword>
<keyword id="KW-0675">Receptor</keyword>
<keyword id="KW-1185">Reference proteome</keyword>
<keyword id="KW-0964">Secreted</keyword>
<keyword id="KW-0732">Signal</keyword>
<keyword id="KW-0807">Transducer</keyword>
<keyword id="KW-0812">Transmembrane</keyword>
<keyword id="KW-1133">Transmembrane helix</keyword>
<keyword id="KW-0832">Ubl conjugation</keyword>
<feature type="signal peptide" evidence="1">
    <location>
        <begin position="1"/>
        <end position="25"/>
    </location>
</feature>
<feature type="chain" id="PRO_0000012882" description="Adhesion G-protein coupled receptor G1">
    <location>
        <begin position="26"/>
        <end position="687"/>
    </location>
</feature>
<feature type="chain" id="PRO_0000436505" description="Adhesion G-protein coupled receptor G1, N-terminal fragment" evidence="1">
    <location>
        <begin position="26"/>
        <end position="382" status="uncertain"/>
    </location>
</feature>
<feature type="chain" id="PRO_0000436506" description="Adhesion G-protein coupled receptor G1, C-terminal fragment" evidence="1">
    <location>
        <begin position="383" status="uncertain"/>
        <end position="687"/>
    </location>
</feature>
<feature type="topological domain" description="Extracellular" evidence="2">
    <location>
        <begin position="26"/>
        <end position="402"/>
    </location>
</feature>
<feature type="transmembrane region" description="Helical; Name=1" evidence="2">
    <location>
        <begin position="403"/>
        <end position="423"/>
    </location>
</feature>
<feature type="topological domain" description="Cytoplasmic" evidence="2">
    <location>
        <begin position="424"/>
        <end position="442"/>
    </location>
</feature>
<feature type="transmembrane region" description="Helical; Name=2" evidence="2">
    <location>
        <begin position="443"/>
        <end position="463"/>
    </location>
</feature>
<feature type="topological domain" description="Extracellular" evidence="2">
    <location>
        <begin position="464"/>
        <end position="471"/>
    </location>
</feature>
<feature type="transmembrane region" description="Helical; Name=3" evidence="2">
    <location>
        <begin position="472"/>
        <end position="492"/>
    </location>
</feature>
<feature type="topological domain" description="Cytoplasmic" evidence="2">
    <location>
        <begin position="493"/>
        <end position="512"/>
    </location>
</feature>
<feature type="transmembrane region" description="Helical; Name=4" evidence="2">
    <location>
        <begin position="513"/>
        <end position="533"/>
    </location>
</feature>
<feature type="topological domain" description="Extracellular" evidence="2">
    <location>
        <begin position="534"/>
        <end position="570"/>
    </location>
</feature>
<feature type="transmembrane region" description="Helical; Name=5" evidence="2">
    <location>
        <begin position="571"/>
        <end position="591"/>
    </location>
</feature>
<feature type="topological domain" description="Cytoplasmic" evidence="2">
    <location>
        <begin position="592"/>
        <end position="603"/>
    </location>
</feature>
<feature type="transmembrane region" description="Helical; Name=6" evidence="2">
    <location>
        <begin position="604"/>
        <end position="624"/>
    </location>
</feature>
<feature type="topological domain" description="Extracellular" evidence="2">
    <location>
        <begin position="625"/>
        <end position="630"/>
    </location>
</feature>
<feature type="transmembrane region" description="Helical; Name=7" evidence="2">
    <location>
        <begin position="631"/>
        <end position="651"/>
    </location>
</feature>
<feature type="topological domain" description="Cytoplasmic" evidence="2">
    <location>
        <begin position="652"/>
        <end position="687"/>
    </location>
</feature>
<feature type="domain" description="GAIN-B" evidence="3">
    <location>
        <begin position="224"/>
        <end position="395"/>
    </location>
</feature>
<feature type="region of interest" description="GPS" evidence="3">
    <location>
        <begin position="346"/>
        <end position="395"/>
    </location>
</feature>
<feature type="region of interest" description="Stachel" evidence="1">
    <location>
        <begin position="384"/>
        <end position="397"/>
    </location>
</feature>
<feature type="region of interest" description="Disordered" evidence="4">
    <location>
        <begin position="664"/>
        <end position="687"/>
    </location>
</feature>
<feature type="compositionally biased region" description="Low complexity" evidence="4">
    <location>
        <begin position="678"/>
        <end position="687"/>
    </location>
</feature>
<feature type="binding site" evidence="1">
    <location>
        <begin position="26"/>
        <end position="33"/>
    </location>
    <ligand>
        <name>heparin</name>
        <dbReference type="ChEBI" id="CHEBI:28304"/>
    </ligand>
</feature>
<feature type="binding site" evidence="1">
    <location>
        <begin position="190"/>
        <end position="200"/>
    </location>
    <ligand>
        <name>heparin</name>
        <dbReference type="ChEBI" id="CHEBI:28304"/>
    </ligand>
</feature>
<feature type="site" description="Cleavage; by autolysis" evidence="3 24">
    <location>
        <begin position="382"/>
        <end position="383"/>
    </location>
</feature>
<feature type="glycosylation site" description="N-linked (GlcNAc...) asparagine" evidence="5 15 26">
    <location>
        <position position="39"/>
    </location>
</feature>
<feature type="glycosylation site" description="N-linked (GlcNAc...) asparagine" evidence="5">
    <location>
        <position position="148"/>
    </location>
</feature>
<feature type="glycosylation site" description="N-linked (GlcNAc...) asparagine" evidence="5">
    <location>
        <position position="171"/>
    </location>
</feature>
<feature type="glycosylation site" description="N-linked (GlcNAc...) asparagine" evidence="5">
    <location>
        <position position="234"/>
    </location>
</feature>
<feature type="glycosylation site" description="N-linked (GlcNAc...) asparagine" evidence="5">
    <location>
        <position position="303"/>
    </location>
</feature>
<feature type="glycosylation site" description="N-linked (GlcNAc...) asparagine" evidence="5">
    <location>
        <position position="324"/>
    </location>
</feature>
<feature type="glycosylation site" description="N-linked (GlcNAc...) asparagine" evidence="5">
    <location>
        <position position="341"/>
    </location>
</feature>
<feature type="disulfide bond" evidence="15 26">
    <location>
        <begin position="35"/>
        <end position="91"/>
    </location>
</feature>
<feature type="disulfide bond" evidence="15 26">
    <location>
        <begin position="121"/>
        <end position="177"/>
    </location>
</feature>
<feature type="disulfide bond" evidence="3 15 26">
    <location>
        <begin position="346"/>
        <end position="377"/>
    </location>
</feature>
<feature type="disulfide bond" evidence="3 15 26">
    <location>
        <begin position="366"/>
        <end position="379"/>
    </location>
</feature>
<feature type="splice variant" id="VSP_062562" description="In isoform 2.">
    <location>
        <begin position="1"/>
        <end position="175"/>
    </location>
</feature>
<feature type="mutagenesis site" description="Reduced cell surface localization." evidence="5 11">
    <original>R</original>
    <variation>Q</variation>
    <variation>W</variation>
    <location>
        <position position="38"/>
    </location>
</feature>
<feature type="mutagenesis site" description="Reduced cell surface localization." evidence="5 11">
    <original>Y</original>
    <variation>C</variation>
    <location>
        <position position="88"/>
    </location>
</feature>
<feature type="mutagenesis site" description="Decreased ability to promote expression of myelin basic protein (mbp)." evidence="15">
    <original>H</original>
    <variation>A</variation>
    <location>
        <position position="89"/>
    </location>
</feature>
<feature type="mutagenesis site" description="Reduced cell surface localization." evidence="5 11">
    <original>C</original>
    <variation>S</variation>
    <location>
        <position position="91"/>
    </location>
</feature>
<feature type="mutagenesis site" description="Does not affect ability to promote expression of myelin basic protein (mbp); when associated with S-177." evidence="15">
    <original>C</original>
    <variation>S</variation>
    <location>
        <position position="121"/>
    </location>
</feature>
<feature type="mutagenesis site" description="Does not affect ability to promote expression of myelin basic protein (mbp)." evidence="15">
    <original>S</original>
    <variation>A</variation>
    <location>
        <position position="150"/>
    </location>
</feature>
<feature type="mutagenesis site" description="Does not affect ability to promote expression of myelin basic protein (mbp); when associated with S-121." evidence="15">
    <original>C</original>
    <variation>S</variation>
    <location>
        <position position="177"/>
    </location>
</feature>
<feature type="mutagenesis site" description="Abolishes proteolytic cleavage and cell surface localization." evidence="5">
    <original>C</original>
    <variation>S</variation>
    <location>
        <position position="346"/>
    </location>
</feature>
<feature type="mutagenesis site" description="Abolishes proteolytic cleavage and cell surface localization." evidence="5">
    <original>W</original>
    <variation>S</variation>
    <location>
        <position position="349"/>
    </location>
</feature>
<feature type="mutagenesis site" description="Impaired autoproteolytic processing without affecting localization to the cell membrane. Decreased ability to promote expression of myelin basic protein (mbp)." evidence="15 17">
    <original>H</original>
    <variation>S</variation>
    <location>
        <position position="381"/>
    </location>
</feature>
<feature type="mutagenesis site" description="Impaired autoproteolytic processing without affection localization to the cell membrane." evidence="17">
    <original>L</original>
    <variation>A</variation>
    <location>
        <position position="382"/>
    </location>
</feature>
<feature type="sequence conflict" description="In Ref. 1; AAF00617." evidence="23" ref="1">
    <original>F</original>
    <variation>Y</variation>
    <location>
        <position position="643"/>
    </location>
</feature>
<feature type="strand" evidence="27">
    <location>
        <begin position="31"/>
        <end position="40"/>
    </location>
</feature>
<feature type="strand" evidence="27">
    <location>
        <begin position="45"/>
        <end position="50"/>
    </location>
</feature>
<feature type="strand" evidence="27">
    <location>
        <begin position="52"/>
        <end position="54"/>
    </location>
</feature>
<feature type="strand" evidence="27">
    <location>
        <begin position="56"/>
        <end position="60"/>
    </location>
</feature>
<feature type="strand" evidence="27">
    <location>
        <begin position="62"/>
        <end position="71"/>
    </location>
</feature>
<feature type="strand" evidence="27">
    <location>
        <begin position="86"/>
        <end position="95"/>
    </location>
</feature>
<feature type="turn" evidence="27">
    <location>
        <begin position="96"/>
        <end position="99"/>
    </location>
</feature>
<feature type="strand" evidence="27">
    <location>
        <begin position="100"/>
        <end position="105"/>
    </location>
</feature>
<feature type="strand" evidence="27">
    <location>
        <begin position="108"/>
        <end position="114"/>
    </location>
</feature>
<feature type="strand" evidence="27">
    <location>
        <begin position="124"/>
        <end position="126"/>
    </location>
</feature>
<feature type="strand" evidence="27">
    <location>
        <begin position="136"/>
        <end position="145"/>
    </location>
</feature>
<feature type="strand" evidence="27">
    <location>
        <begin position="155"/>
        <end position="160"/>
    </location>
</feature>
<feature type="helix" evidence="27">
    <location>
        <begin position="176"/>
        <end position="191"/>
    </location>
</feature>
<feature type="helix" evidence="27">
    <location>
        <begin position="193"/>
        <end position="195"/>
    </location>
</feature>
<feature type="strand" evidence="27">
    <location>
        <begin position="196"/>
        <end position="198"/>
    </location>
</feature>
<feature type="helix" evidence="27">
    <location>
        <begin position="202"/>
        <end position="218"/>
    </location>
</feature>
<feature type="strand" evidence="27">
    <location>
        <begin position="222"/>
        <end position="230"/>
    </location>
</feature>
<feature type="strand" evidence="27">
    <location>
        <begin position="233"/>
        <end position="239"/>
    </location>
</feature>
<feature type="helix" evidence="27">
    <location>
        <begin position="242"/>
        <end position="246"/>
    </location>
</feature>
<feature type="strand" evidence="27">
    <location>
        <begin position="249"/>
        <end position="252"/>
    </location>
</feature>
<feature type="strand" evidence="27">
    <location>
        <begin position="259"/>
        <end position="269"/>
    </location>
</feature>
<feature type="helix" evidence="27">
    <location>
        <begin position="271"/>
        <end position="274"/>
    </location>
</feature>
<feature type="strand" evidence="27">
    <location>
        <begin position="287"/>
        <end position="294"/>
    </location>
</feature>
<feature type="helix" evidence="27">
    <location>
        <begin position="308"/>
        <end position="310"/>
    </location>
</feature>
<feature type="strand" evidence="27">
    <location>
        <begin position="311"/>
        <end position="317"/>
    </location>
</feature>
<feature type="strand" evidence="27">
    <location>
        <begin position="329"/>
        <end position="335"/>
    </location>
</feature>
<feature type="strand" evidence="27">
    <location>
        <begin position="343"/>
        <end position="350"/>
    </location>
</feature>
<feature type="turn" evidence="27">
    <location>
        <begin position="353"/>
        <end position="355"/>
    </location>
</feature>
<feature type="strand" evidence="27">
    <location>
        <begin position="360"/>
        <end position="362"/>
    </location>
</feature>
<feature type="strand" evidence="27">
    <location>
        <begin position="366"/>
        <end position="370"/>
    </location>
</feature>
<feature type="strand" evidence="27">
    <location>
        <begin position="372"/>
        <end position="381"/>
    </location>
</feature>
<feature type="strand" evidence="27">
    <location>
        <begin position="384"/>
        <end position="390"/>
    </location>
</feature>
<gene>
    <name evidence="21 25" type="primary">Adgrg1</name>
    <name type="synonym">Cyt28</name>
    <name evidence="21" type="synonym">Gpr56</name>
</gene>
<proteinExistence type="evidence at protein level"/>
<sequence>MAVQVLRQMVYFLLSLFSLVQGAHSGSPREDFRFCGQRNQTQQSTLHYDQSSEPHIFVWNTEETLTIRAPFLAAPDIPRFFPEPRGLYHFCLYWSRHTGRLHLRYGKHDYLLSSQASRLLCFQKQEQSLKQGAPLIATSVSSWQIPQNTSLPGAPSFIFSFHNAPHKVSHNASVDMCDLKKELQQLSRYLQHPQKAAKRPTAAFISQQLQSLESKLTSVSFLGDTLSFEEDRVNATVWKLPPTAGLEDLHIHSQKEEEQSEVQAYSLLLPRAVFQQTRGRRRDDAKRLLVVDFSSQALFQDKNSSQVLGEKVLGIVVQNTKVTNLSDPVVLTFQHQPQPKNVTLQCVFWVEDPASSSTGSWSSAGCETVSRDTQTSCLCNHLTYFAVLMVSSTEVEATHKHYLTLLSYVGCVISALACVFTIAAYLCSRRKSRDYTIKVHMNLLSAVFLLDVSFLLSEPVALTGSEAACRTSAMFLHFSLLACLSWMGLEGYNLYRLVVEVFGTYVPGYLLKLSIVGWGFPVFLVTLVALVDVNNYGPIILAVRRTPERVTYPSMCWIRDSLVSYVTNLGLFSLVFLFNLAMLATMVVQILRLRPHSQNWPHVLTLLGLSLVLGLPWALVFFSFASGTFQLVILYLFSIITSFQGFLIFLWYWSMRFQAQGGPSPLKNNSDSAKLPISSGSTSSSRI</sequence>
<reference key="1">
    <citation type="submission" date="1999-07" db="EMBL/GenBank/DDBJ databases">
        <title>Identification of novel hematopoietic stem cell regulatory genes.</title>
        <authorList>
            <person name="Phillips R.L."/>
            <person name="Ernst R.E."/>
            <person name="Dosil M."/>
            <person name="Wesley C.K."/>
            <person name="Moore K.A."/>
            <person name="Kingsley P.D."/>
            <person name="Sykes S."/>
            <person name="Palis J."/>
            <person name="Lemischka I.R."/>
        </authorList>
    </citation>
    <scope>NUCLEOTIDE SEQUENCE [MRNA]</scope>
    <source>
        <strain>C57BL/6J</strain>
        <tissue>Liver</tissue>
    </source>
</reference>
<reference key="2">
    <citation type="journal article" date="2005" name="Science">
        <title>The transcriptional landscape of the mammalian genome.</title>
        <authorList>
            <person name="Carninci P."/>
            <person name="Kasukawa T."/>
            <person name="Katayama S."/>
            <person name="Gough J."/>
            <person name="Frith M.C."/>
            <person name="Maeda N."/>
            <person name="Oyama R."/>
            <person name="Ravasi T."/>
            <person name="Lenhard B."/>
            <person name="Wells C."/>
            <person name="Kodzius R."/>
            <person name="Shimokawa K."/>
            <person name="Bajic V.B."/>
            <person name="Brenner S.E."/>
            <person name="Batalov S."/>
            <person name="Forrest A.R."/>
            <person name="Zavolan M."/>
            <person name="Davis M.J."/>
            <person name="Wilming L.G."/>
            <person name="Aidinis V."/>
            <person name="Allen J.E."/>
            <person name="Ambesi-Impiombato A."/>
            <person name="Apweiler R."/>
            <person name="Aturaliya R.N."/>
            <person name="Bailey T.L."/>
            <person name="Bansal M."/>
            <person name="Baxter L."/>
            <person name="Beisel K.W."/>
            <person name="Bersano T."/>
            <person name="Bono H."/>
            <person name="Chalk A.M."/>
            <person name="Chiu K.P."/>
            <person name="Choudhary V."/>
            <person name="Christoffels A."/>
            <person name="Clutterbuck D.R."/>
            <person name="Crowe M.L."/>
            <person name="Dalla E."/>
            <person name="Dalrymple B.P."/>
            <person name="de Bono B."/>
            <person name="Della Gatta G."/>
            <person name="di Bernardo D."/>
            <person name="Down T."/>
            <person name="Engstrom P."/>
            <person name="Fagiolini M."/>
            <person name="Faulkner G."/>
            <person name="Fletcher C.F."/>
            <person name="Fukushima T."/>
            <person name="Furuno M."/>
            <person name="Futaki S."/>
            <person name="Gariboldi M."/>
            <person name="Georgii-Hemming P."/>
            <person name="Gingeras T.R."/>
            <person name="Gojobori T."/>
            <person name="Green R.E."/>
            <person name="Gustincich S."/>
            <person name="Harbers M."/>
            <person name="Hayashi Y."/>
            <person name="Hensch T.K."/>
            <person name="Hirokawa N."/>
            <person name="Hill D."/>
            <person name="Huminiecki L."/>
            <person name="Iacono M."/>
            <person name="Ikeo K."/>
            <person name="Iwama A."/>
            <person name="Ishikawa T."/>
            <person name="Jakt M."/>
            <person name="Kanapin A."/>
            <person name="Katoh M."/>
            <person name="Kawasawa Y."/>
            <person name="Kelso J."/>
            <person name="Kitamura H."/>
            <person name="Kitano H."/>
            <person name="Kollias G."/>
            <person name="Krishnan S.P."/>
            <person name="Kruger A."/>
            <person name="Kummerfeld S.K."/>
            <person name="Kurochkin I.V."/>
            <person name="Lareau L.F."/>
            <person name="Lazarevic D."/>
            <person name="Lipovich L."/>
            <person name="Liu J."/>
            <person name="Liuni S."/>
            <person name="McWilliam S."/>
            <person name="Madan Babu M."/>
            <person name="Madera M."/>
            <person name="Marchionni L."/>
            <person name="Matsuda H."/>
            <person name="Matsuzawa S."/>
            <person name="Miki H."/>
            <person name="Mignone F."/>
            <person name="Miyake S."/>
            <person name="Morris K."/>
            <person name="Mottagui-Tabar S."/>
            <person name="Mulder N."/>
            <person name="Nakano N."/>
            <person name="Nakauchi H."/>
            <person name="Ng P."/>
            <person name="Nilsson R."/>
            <person name="Nishiguchi S."/>
            <person name="Nishikawa S."/>
            <person name="Nori F."/>
            <person name="Ohara O."/>
            <person name="Okazaki Y."/>
            <person name="Orlando V."/>
            <person name="Pang K.C."/>
            <person name="Pavan W.J."/>
            <person name="Pavesi G."/>
            <person name="Pesole G."/>
            <person name="Petrovsky N."/>
            <person name="Piazza S."/>
            <person name="Reed J."/>
            <person name="Reid J.F."/>
            <person name="Ring B.Z."/>
            <person name="Ringwald M."/>
            <person name="Rost B."/>
            <person name="Ruan Y."/>
            <person name="Salzberg S.L."/>
            <person name="Sandelin A."/>
            <person name="Schneider C."/>
            <person name="Schoenbach C."/>
            <person name="Sekiguchi K."/>
            <person name="Semple C.A."/>
            <person name="Seno S."/>
            <person name="Sessa L."/>
            <person name="Sheng Y."/>
            <person name="Shibata Y."/>
            <person name="Shimada H."/>
            <person name="Shimada K."/>
            <person name="Silva D."/>
            <person name="Sinclair B."/>
            <person name="Sperling S."/>
            <person name="Stupka E."/>
            <person name="Sugiura K."/>
            <person name="Sultana R."/>
            <person name="Takenaka Y."/>
            <person name="Taki K."/>
            <person name="Tammoja K."/>
            <person name="Tan S.L."/>
            <person name="Tang S."/>
            <person name="Taylor M.S."/>
            <person name="Tegner J."/>
            <person name="Teichmann S.A."/>
            <person name="Ueda H.R."/>
            <person name="van Nimwegen E."/>
            <person name="Verardo R."/>
            <person name="Wei C.L."/>
            <person name="Yagi K."/>
            <person name="Yamanishi H."/>
            <person name="Zabarovsky E."/>
            <person name="Zhu S."/>
            <person name="Zimmer A."/>
            <person name="Hide W."/>
            <person name="Bult C."/>
            <person name="Grimmond S.M."/>
            <person name="Teasdale R.D."/>
            <person name="Liu E.T."/>
            <person name="Brusic V."/>
            <person name="Quackenbush J."/>
            <person name="Wahlestedt C."/>
            <person name="Mattick J.S."/>
            <person name="Hume D.A."/>
            <person name="Kai C."/>
            <person name="Sasaki D."/>
            <person name="Tomaru Y."/>
            <person name="Fukuda S."/>
            <person name="Kanamori-Katayama M."/>
            <person name="Suzuki M."/>
            <person name="Aoki J."/>
            <person name="Arakawa T."/>
            <person name="Iida J."/>
            <person name="Imamura K."/>
            <person name="Itoh M."/>
            <person name="Kato T."/>
            <person name="Kawaji H."/>
            <person name="Kawagashira N."/>
            <person name="Kawashima T."/>
            <person name="Kojima M."/>
            <person name="Kondo S."/>
            <person name="Konno H."/>
            <person name="Nakano K."/>
            <person name="Ninomiya N."/>
            <person name="Nishio T."/>
            <person name="Okada M."/>
            <person name="Plessy C."/>
            <person name="Shibata K."/>
            <person name="Shiraki T."/>
            <person name="Suzuki S."/>
            <person name="Tagami M."/>
            <person name="Waki K."/>
            <person name="Watahiki A."/>
            <person name="Okamura-Oho Y."/>
            <person name="Suzuki H."/>
            <person name="Kawai J."/>
            <person name="Hayashizaki Y."/>
        </authorList>
    </citation>
    <scope>NUCLEOTIDE SEQUENCE [LARGE SCALE MRNA]</scope>
    <source>
        <strain>C57BL/6J</strain>
        <tissue>Lung</tissue>
        <tissue>Pituitary</tissue>
        <tissue>Placenta</tissue>
        <tissue>Spinal ganglion</tissue>
    </source>
</reference>
<reference key="3">
    <citation type="journal article" date="2004" name="Genome Res.">
        <title>The status, quality, and expansion of the NIH full-length cDNA project: the Mammalian Gene Collection (MGC).</title>
        <authorList>
            <consortium name="The MGC Project Team"/>
        </authorList>
    </citation>
    <scope>NUCLEOTIDE SEQUENCE [LARGE SCALE MRNA]</scope>
</reference>
<reference key="4">
    <citation type="journal article" date="2007" name="Hum. Mol. Genet.">
        <title>Disease-associated mutations affect GPR56 protein trafficking and cell surface expression.</title>
        <authorList>
            <person name="Jin Z."/>
            <person name="Tietjen I."/>
            <person name="Bu L."/>
            <person name="Liu-Yesucevitz L."/>
            <person name="Gaur S.K."/>
            <person name="Walsh C.A."/>
            <person name="Piao X."/>
        </authorList>
    </citation>
    <scope>SUBUNIT</scope>
    <scope>SUBCELLULAR LOCATION</scope>
    <scope>GLYCOSYLATION AT ASN-39; ASN-148; ASN-171; ASN-234; ASN-303; ASN-324 AND ASN-341</scope>
    <scope>MUTAGENESIS OF ARG-38; TYR-88; CYS-91; CYS-346 AND TRP-349</scope>
</reference>
<reference key="5">
    <citation type="journal article" date="2008" name="J. Neurosci.">
        <title>GPR56 regulates pial basement membrane integrity and cortical lamination.</title>
        <authorList>
            <person name="Li S."/>
            <person name="Jin Z."/>
            <person name="Koirala S."/>
            <person name="Bu L."/>
            <person name="Xu L."/>
            <person name="Hynes R.O."/>
            <person name="Walsh C.A."/>
            <person name="Corfas G."/>
            <person name="Piao X."/>
        </authorList>
    </citation>
    <scope>FUNCTION</scope>
    <scope>DISRUPTION PHENOTYPE</scope>
</reference>
<reference key="6">
    <citation type="journal article" date="2008" name="J. Biol. Chem.">
        <title>Orphan G protein-coupled receptor GPR56 regulates neural progenitor cell migration via a G alpha 12/13 and Rho pathway.</title>
        <authorList>
            <person name="Iguchi T."/>
            <person name="Sakata K."/>
            <person name="Yoshizaki K."/>
            <person name="Tago K."/>
            <person name="Mizuno N."/>
            <person name="Itoh H."/>
        </authorList>
    </citation>
    <scope>FUNCTION</scope>
</reference>
<reference key="7">
    <citation type="journal article" date="2009" name="J. Neurosci.">
        <title>GPR56-regulated granule cell adhesion is essential for rostral cerebellar development.</title>
        <authorList>
            <person name="Koirala S."/>
            <person name="Jin Z."/>
            <person name="Piao X."/>
            <person name="Corfas G."/>
        </authorList>
    </citation>
    <scope>FUNCTION</scope>
    <scope>DISRUPTION PHENOTYPE</scope>
</reference>
<reference key="8">
    <citation type="journal article" date="2010" name="Cell">
        <title>A tissue-specific atlas of mouse protein phosphorylation and expression.</title>
        <authorList>
            <person name="Huttlin E.L."/>
            <person name="Jedrychowski M.P."/>
            <person name="Elias J.E."/>
            <person name="Goswami T."/>
            <person name="Rad R."/>
            <person name="Beausoleil S.A."/>
            <person name="Villen J."/>
            <person name="Haas W."/>
            <person name="Sowa M.E."/>
            <person name="Gygi S.P."/>
        </authorList>
    </citation>
    <scope>IDENTIFICATION BY MASS SPECTROMETRY [LARGE SCALE ANALYSIS]</scope>
    <source>
        <tissue>Brain</tissue>
        <tissue>Kidney</tissue>
        <tissue>Lung</tissue>
    </source>
</reference>
<reference key="9">
    <citation type="journal article" date="2010" name="Dev. Dyn.">
        <title>GPR56 is essential for testis development and male fertility in mice.</title>
        <authorList>
            <person name="Chen G."/>
            <person name="Yang L."/>
            <person name="Begum S."/>
            <person name="Xu L."/>
        </authorList>
    </citation>
    <scope>FUNCTION</scope>
    <scope>TISSUE SPECIFICITY</scope>
</reference>
<reference key="10">
    <citation type="journal article" date="2011" name="Proc. Natl. Acad. Sci. U.S.A.">
        <title>G protein-coupled receptor 56 and collagen III, a receptor-ligand pair, regulates cortical development and lamination.</title>
        <authorList>
            <person name="Luo R."/>
            <person name="Jeong S.J."/>
            <person name="Jin Z."/>
            <person name="Strokes N."/>
            <person name="Li S."/>
            <person name="Piao X."/>
        </authorList>
    </citation>
    <scope>FUNCTION</scope>
    <scope>TISSUE SPECIFICITY</scope>
    <scope>LIGAND-BINDING</scope>
</reference>
<reference key="11">
    <citation type="journal article" date="2012" name="PLoS ONE">
        <title>Disease-associated mutations prevent GPR56-collagen III interaction.</title>
        <authorList>
            <person name="Luo R."/>
            <person name="Jin Z."/>
            <person name="Deng Y."/>
            <person name="Strokes N."/>
            <person name="Piao X."/>
        </authorList>
    </citation>
    <scope>LIGAND-BINDING</scope>
    <scope>MUTAGENESIS OF ARG-38; TYR-88 AND CYS-91</scope>
</reference>
<reference key="12">
    <citation type="journal article" date="2013" name="Leukemia">
        <title>Maintenance of the hematopoietic stem cell pool in bone marrow niches by EVI1-regulated GPR56.</title>
        <authorList>
            <person name="Saito Y."/>
            <person name="Kaneda K."/>
            <person name="Suekane A."/>
            <person name="Ichihara E."/>
            <person name="Nakahata S."/>
            <person name="Yamakawa N."/>
            <person name="Nagai K."/>
            <person name="Mizuno N."/>
            <person name="Kogawa K."/>
            <person name="Miura I."/>
            <person name="Itoh H."/>
            <person name="Morishita K."/>
        </authorList>
    </citation>
    <scope>FUNCTION</scope>
</reference>
<reference key="13">
    <citation type="journal article" date="2014" name="Science">
        <title>Evolutionarily dynamic alternative splicing of GPR56 regulates regional cerebral cortical patterning.</title>
        <authorList>
            <person name="Bae B.I."/>
            <person name="Tietjen I."/>
            <person name="Atabay K.D."/>
            <person name="Evrony G.D."/>
            <person name="Johnson M.B."/>
            <person name="Asare E."/>
            <person name="Wang P.P."/>
            <person name="Murayama A.Y."/>
            <person name="Im K."/>
            <person name="Lisgo S.N."/>
            <person name="Overman L."/>
            <person name="Sestan N."/>
            <person name="Chang B.S."/>
            <person name="Barkovich A.J."/>
            <person name="Grant P.E."/>
            <person name="Topcu M."/>
            <person name="Politsky J."/>
            <person name="Okano H."/>
            <person name="Piao X."/>
            <person name="Walsh C.A."/>
        </authorList>
    </citation>
    <scope>FUNCTION</scope>
    <scope>DISRUPTION PHENOTYPE</scope>
</reference>
<reference key="14">
    <citation type="journal article" date="2016" name="J. Cell Sci.">
        <title>Heparin interacts with adhesion-GPCR GPR56/ADGRG1, reduces receptor shedding, and promotes cell adhesion and motility.</title>
        <authorList>
            <person name="Chiang N.Y."/>
            <person name="Chang G.W."/>
            <person name="Huang Y.S."/>
            <person name="Peng Y.M."/>
            <person name="Hsiao C.C."/>
            <person name="Kuo M.L."/>
            <person name="Lin H.H."/>
        </authorList>
    </citation>
    <scope>INTERACTION WITH HEPARIN</scope>
</reference>
<reference key="15">
    <citation type="journal article" date="2018" name="Elife">
        <title>Microglial transglutaminase-2 drives myelination and myelin repair via GPR56/ADGRG1 in oligodendrocyte precursor cells.</title>
        <authorList>
            <person name="Giera S."/>
            <person name="Luo R."/>
            <person name="Ying Y."/>
            <person name="Ackerman S.D."/>
            <person name="Jeong S.J."/>
            <person name="Stoveken H.M."/>
            <person name="Folts C.J."/>
            <person name="Welsh C.A."/>
            <person name="Tall G.G."/>
            <person name="Stevens B."/>
            <person name="Monk K.R."/>
            <person name="Piao X."/>
        </authorList>
    </citation>
    <scope>FUNCTION</scope>
</reference>
<reference key="16">
    <citation type="journal article" date="2019" name="J. Biol. Chem.">
        <title>GAIN domain-mediated cleavage is required for activation of G protein-coupled receptor 56 (GPR56) by its natural ligands and a small-molecule agonist.</title>
        <authorList>
            <person name="Zhu B."/>
            <person name="Luo R."/>
            <person name="Jin P."/>
            <person name="Li T."/>
            <person name="Oak H.C."/>
            <person name="Giera S."/>
            <person name="Monk K.R."/>
            <person name="Lak P."/>
            <person name="Shoichet B.K."/>
            <person name="Piao X."/>
        </authorList>
    </citation>
    <scope>FUNCTION</scope>
    <scope>ACTIVITY REGULATION</scope>
    <scope>PROTEOLYTIC CLEAVAGE</scope>
    <scope>SUBCELLULAR LOCATION</scope>
    <scope>INTERACTION WITH TGM2</scope>
    <scope>MUTAGENESIS OF HIS-381 AND LEU-382</scope>
</reference>
<reference key="17">
    <citation type="journal article" date="2020" name="EMBO J.">
        <title>A splicing isoform of GPR56 mediates microglial synaptic refinement via phosphatidylserine binding.</title>
        <authorList>
            <person name="Li T."/>
            <person name="Chiou B."/>
            <person name="Gilman C.K."/>
            <person name="Luo R."/>
            <person name="Koshi T."/>
            <person name="Yu D."/>
            <person name="Oak H.C."/>
            <person name="Giera S."/>
            <person name="Johnson-Venkatesh E."/>
            <person name="Muthukumar A.K."/>
            <person name="Stevens B."/>
            <person name="Umemori H."/>
            <person name="Piao X."/>
        </authorList>
    </citation>
    <scope>FUNCTION (ISOFORM 2)</scope>
    <scope>DISRUPTION PHENOTYPE (ISOFORM 2)</scope>
</reference>
<reference key="18">
    <citation type="journal article" date="2020" name="Proc. Natl. Acad. Sci. U.S.A.">
        <title>GPR56/ADGRG1 is a platelet collagen-responsive GPCR and hemostatic sensor of shear force.</title>
        <authorList>
            <person name="Yeung J."/>
            <person name="Adili R."/>
            <person name="Stringham E.N."/>
            <person name="Luo R."/>
            <person name="Vizurraga A."/>
            <person name="Rosselli-Murai L.K."/>
            <person name="Stoveken H.M."/>
            <person name="Yu M."/>
            <person name="Piao X."/>
            <person name="Holinstat M."/>
            <person name="Tall G.G."/>
        </authorList>
    </citation>
    <scope>FUNCTION</scope>
</reference>
<reference key="19">
    <citation type="journal article" date="2024" name="Cell Metab.">
        <title>Sensing steroid hormone 17alpha-hydroxypregnenolone by GPR56 enables protection from ferroptosis-induced liver injury.</title>
        <authorList>
            <person name="Lin H."/>
            <person name="Ma C."/>
            <person name="Zhuang X."/>
            <person name="Liu S."/>
            <person name="Liu D."/>
            <person name="Zhang M."/>
            <person name="Lu Y."/>
            <person name="Zhou G."/>
            <person name="Zhang C."/>
            <person name="Wang T."/>
            <person name="Zhang Z."/>
            <person name="Lv L."/>
            <person name="Zhang D."/>
            <person name="Ruan X.Z."/>
            <person name="Xu Y."/>
            <person name="Chai R."/>
            <person name="Yu X."/>
            <person name="Sun J.P."/>
            <person name="Chu B."/>
        </authorList>
    </citation>
    <scope>FUNCTION</scope>
    <scope>DISRUPTION PHENOTYPE</scope>
</reference>
<reference evidence="26" key="20">
    <citation type="journal article" date="2016" name="Neuron">
        <title>Structural basis for regulation of GPR56/ADGRG1 by its alternatively spliced extracellular domains.</title>
        <authorList>
            <person name="Salzman G.S."/>
            <person name="Ackerman S.D."/>
            <person name="Ding C."/>
            <person name="Koide A."/>
            <person name="Leon K."/>
            <person name="Luo R."/>
            <person name="Stoveken H.M."/>
            <person name="Fernandez C.G."/>
            <person name="Tall G.G."/>
            <person name="Piao X."/>
            <person name="Monk K.R."/>
            <person name="Koide S."/>
            <person name="Arac D."/>
        </authorList>
    </citation>
    <scope>X-RAY CRYSTALLOGRAPHY (2.45 ANGSTROMS) OF 28-391 (ISOFORM 2)</scope>
    <scope>GLYCOSYLATION AT ASN-39</scope>
    <scope>DISULFIDE BONDS</scope>
    <scope>SUBCELLULAR LOCATION (ISOFORM 2)</scope>
    <scope>MUTAGENESIS OF HIS-89; CYS-121; SER-150; CYS-177 AND HIS-381</scope>
</reference>
<name>AGRG1_MOUSE</name>